<organism>
    <name type="scientific">Mycobacterium tuberculosis (strain ATCC 25618 / H37Rv)</name>
    <dbReference type="NCBI Taxonomy" id="83332"/>
    <lineage>
        <taxon>Bacteria</taxon>
        <taxon>Bacillati</taxon>
        <taxon>Actinomycetota</taxon>
        <taxon>Actinomycetes</taxon>
        <taxon>Mycobacteriales</taxon>
        <taxon>Mycobacteriaceae</taxon>
        <taxon>Mycobacterium</taxon>
        <taxon>Mycobacterium tuberculosis complex</taxon>
    </lineage>
</organism>
<gene>
    <name type="ordered locus">Rv1762c</name>
</gene>
<keyword id="KW-1284">Encapsulin nanocompartment</keyword>
<keyword id="KW-1185">Reference proteome</keyword>
<dbReference type="EMBL" id="AL123456">
    <property type="protein sequence ID" value="CCP44528.1"/>
    <property type="molecule type" value="Genomic_DNA"/>
</dbReference>
<dbReference type="RefSeq" id="NP_216278.1">
    <property type="nucleotide sequence ID" value="NC_000962.3"/>
</dbReference>
<dbReference type="RefSeq" id="WP_003899009.1">
    <property type="nucleotide sequence ID" value="NZ_NVQJ01000095.1"/>
</dbReference>
<dbReference type="SMR" id="O06797"/>
<dbReference type="STRING" id="83332.Rv1762c"/>
<dbReference type="TCDB" id="1.S.10.1.1">
    <property type="family name" value="the bacterial/archaeal nanocompartment encapsulin shell protein6 (banc-sp5) family"/>
</dbReference>
<dbReference type="PaxDb" id="83332-Rv1762c"/>
<dbReference type="DNASU" id="885373"/>
<dbReference type="GeneID" id="885373"/>
<dbReference type="KEGG" id="mtu:Rv1762c"/>
<dbReference type="KEGG" id="mtv:RVBD_1762c"/>
<dbReference type="PATRIC" id="fig|83332.111.peg.1961"/>
<dbReference type="TubercuList" id="Rv1762c"/>
<dbReference type="eggNOG" id="COG0393">
    <property type="taxonomic scope" value="Bacteria"/>
</dbReference>
<dbReference type="InParanoid" id="O06797"/>
<dbReference type="OrthoDB" id="3289343at2"/>
<dbReference type="Proteomes" id="UP000001584">
    <property type="component" value="Chromosome"/>
</dbReference>
<dbReference type="GO" id="GO:0140737">
    <property type="term" value="C:encapsulin nanocompartment"/>
    <property type="evidence" value="ECO:0000314"/>
    <property type="project" value="UniProtKB"/>
</dbReference>
<dbReference type="GO" id="GO:0005886">
    <property type="term" value="C:plasma membrane"/>
    <property type="evidence" value="ECO:0007005"/>
    <property type="project" value="MTBBASE"/>
</dbReference>
<dbReference type="FunFam" id="3.30.110.70:FF:000002">
    <property type="entry name" value="Heavy-metal-binding family protein"/>
    <property type="match status" value="1"/>
</dbReference>
<dbReference type="FunFam" id="3.30.110.70:FF:000003">
    <property type="entry name" value="Heavy-metal-binding family protein"/>
    <property type="match status" value="1"/>
</dbReference>
<dbReference type="Gene3D" id="3.30.110.70">
    <property type="entry name" value="Hypothetical protein apc22750. Chain B"/>
    <property type="match status" value="2"/>
</dbReference>
<dbReference type="InterPro" id="IPR035439">
    <property type="entry name" value="UPF0145_dom_sf"/>
</dbReference>
<dbReference type="InterPro" id="IPR002765">
    <property type="entry name" value="UPF0145_YbjQ-like"/>
</dbReference>
<dbReference type="PANTHER" id="PTHR34068:SF2">
    <property type="entry name" value="UPF0145 PROTEIN SCO3412"/>
    <property type="match status" value="1"/>
</dbReference>
<dbReference type="PANTHER" id="PTHR34068">
    <property type="entry name" value="UPF0145 PROTEIN YBJQ"/>
    <property type="match status" value="1"/>
</dbReference>
<dbReference type="Pfam" id="PF01906">
    <property type="entry name" value="YbjQ_1"/>
    <property type="match status" value="2"/>
</dbReference>
<dbReference type="SUPFAM" id="SSF117782">
    <property type="entry name" value="YbjQ-like"/>
    <property type="match status" value="2"/>
</dbReference>
<proteinExistence type="evidence at protein level"/>
<accession>O06797</accession>
<accession>F2GJG6</accession>
<accession>I6XCF6</accession>
<accession>Q7D803</accession>
<evidence type="ECO:0000269" key="1">
    <source>
    </source>
</evidence>
<evidence type="ECO:0000305" key="2"/>
<evidence type="ECO:0007744" key="3">
    <source>
    </source>
</evidence>
<protein>
    <recommendedName>
        <fullName evidence="2">Encapsulin nanocompartment protein Rv1762c</fullName>
    </recommendedName>
</protein>
<feature type="chain" id="PRO_0000455334" description="Encapsulin nanocompartment protein Rv1762c">
    <location>
        <begin position="1"/>
        <end position="262"/>
    </location>
</feature>
<sequence length="262" mass="28755">MQSSSLDPVASERLSHAEKSFTSDLSINEFALLHGAGFEPIELVMGVSVYHVGFQFSGMRQQQELGVLTEATYRARWNAMARMQAEADALKADGIVGVRLNWRHHGEGGEHLEFMAVGTAVRYTAKPGAFRRPNGQAFSSHLSGQDMVTLLRSGFAPVAFVMGNCVFHIAVQGFMQTLRQIGRNMEMPQWTQGNYQARELAMSRMQSEAERDGATGVVGVHFAISNYAWGVHTVEFYTAGTAVRRTGSGETITPSFVLPMDS</sequence>
<name>Y1762_MYCTU</name>
<comment type="function">
    <text evidence="1">Cargo protein of a type 1 encapsulin nanocompartment possibly involved in protection against oxidative stress.</text>
</comment>
<comment type="subcellular location">
    <subcellularLocation>
        <location evidence="1">Encapsulin nanocompartment</location>
    </subcellularLocation>
    <text evidence="1">Consistently identified in encapsulin nanocompartments isolated in situ.</text>
</comment>
<comment type="similarity">
    <text evidence="2">Belongs to the UPF0145 family.</text>
</comment>
<reference key="1">
    <citation type="journal article" date="1998" name="Nature">
        <title>Deciphering the biology of Mycobacterium tuberculosis from the complete genome sequence.</title>
        <authorList>
            <person name="Cole S.T."/>
            <person name="Brosch R."/>
            <person name="Parkhill J."/>
            <person name="Garnier T."/>
            <person name="Churcher C.M."/>
            <person name="Harris D.E."/>
            <person name="Gordon S.V."/>
            <person name="Eiglmeier K."/>
            <person name="Gas S."/>
            <person name="Barry C.E. III"/>
            <person name="Tekaia F."/>
            <person name="Badcock K."/>
            <person name="Basham D."/>
            <person name="Brown D."/>
            <person name="Chillingworth T."/>
            <person name="Connor R."/>
            <person name="Davies R.M."/>
            <person name="Devlin K."/>
            <person name="Feltwell T."/>
            <person name="Gentles S."/>
            <person name="Hamlin N."/>
            <person name="Holroyd S."/>
            <person name="Hornsby T."/>
            <person name="Jagels K."/>
            <person name="Krogh A."/>
            <person name="McLean J."/>
            <person name="Moule S."/>
            <person name="Murphy L.D."/>
            <person name="Oliver S."/>
            <person name="Osborne J."/>
            <person name="Quail M.A."/>
            <person name="Rajandream M.A."/>
            <person name="Rogers J."/>
            <person name="Rutter S."/>
            <person name="Seeger K."/>
            <person name="Skelton S."/>
            <person name="Squares S."/>
            <person name="Squares R."/>
            <person name="Sulston J.E."/>
            <person name="Taylor K."/>
            <person name="Whitehead S."/>
            <person name="Barrell B.G."/>
        </authorList>
    </citation>
    <scope>NUCLEOTIDE SEQUENCE [LARGE SCALE GENOMIC DNA]</scope>
    <source>
        <strain>ATCC 25618 / H37Rv</strain>
    </source>
</reference>
<reference evidence="3" key="2">
    <citation type="journal article" date="2011" name="Mol. Cell. Proteomics">
        <title>Proteogenomic analysis of Mycobacterium tuberculosis by high resolution mass spectrometry.</title>
        <authorList>
            <person name="Kelkar D.S."/>
            <person name="Kumar D."/>
            <person name="Kumar P."/>
            <person name="Balakrishnan L."/>
            <person name="Muthusamy B."/>
            <person name="Yadav A.K."/>
            <person name="Shrivastava P."/>
            <person name="Marimuthu A."/>
            <person name="Anand S."/>
            <person name="Sundaram H."/>
            <person name="Kingsbury R."/>
            <person name="Harsha H.C."/>
            <person name="Nair B."/>
            <person name="Prasad T.S."/>
            <person name="Chauhan D.S."/>
            <person name="Katoch K."/>
            <person name="Katoch V.M."/>
            <person name="Kumar P."/>
            <person name="Chaerkady R."/>
            <person name="Ramachandran S."/>
            <person name="Dash D."/>
            <person name="Pandey A."/>
        </authorList>
    </citation>
    <scope>IDENTIFICATION BY MASS SPECTROMETRY [LARGE SCALE ANALYSIS]</scope>
    <source>
        <strain>H37Rv</strain>
    </source>
</reference>
<reference key="3">
    <citation type="journal article" date="2021" name="Elife">
        <title>A nanocompartment system contributes to defense against oxidative stress in Mycobacterium tuberculosis.</title>
        <authorList>
            <person name="Lien K.A."/>
            <person name="Dinshaw K."/>
            <person name="Nichols R.J."/>
            <person name="Cassidy-Amstutz C."/>
            <person name="Knight M."/>
            <person name="Singh R."/>
            <person name="Eltis L.D."/>
            <person name="Savage D.F."/>
            <person name="Stanley S.A."/>
        </authorList>
    </citation>
    <scope>IDENTIFICATION BY MASS SPECTROMETRY</scope>
    <scope>SUBCELLULAR LOCATION</scope>
    <source>
        <strain>H37Rv</strain>
    </source>
</reference>